<comment type="function">
    <text evidence="1">Removes the pyruvyl group from chorismate, with concomitant aromatization of the ring, to provide 4-hydroxybenzoate (4HB) for the ubiquinone pathway.</text>
</comment>
<comment type="catalytic activity">
    <reaction evidence="1">
        <text>chorismate = 4-hydroxybenzoate + pyruvate</text>
        <dbReference type="Rhea" id="RHEA:16505"/>
        <dbReference type="ChEBI" id="CHEBI:15361"/>
        <dbReference type="ChEBI" id="CHEBI:17879"/>
        <dbReference type="ChEBI" id="CHEBI:29748"/>
        <dbReference type="EC" id="4.1.3.40"/>
    </reaction>
</comment>
<comment type="pathway">
    <text evidence="1">Cofactor biosynthesis; ubiquinone biosynthesis.</text>
</comment>
<comment type="subunit">
    <text evidence="1">Monomer.</text>
</comment>
<comment type="subcellular location">
    <subcellularLocation>
        <location evidence="1">Cytoplasm</location>
    </subcellularLocation>
</comment>
<comment type="similarity">
    <text evidence="1">Belongs to the UbiC family.</text>
</comment>
<dbReference type="EC" id="4.1.3.40" evidence="1"/>
<dbReference type="EMBL" id="CP000783">
    <property type="protein sequence ID" value="ABU75390.1"/>
    <property type="molecule type" value="Genomic_DNA"/>
</dbReference>
<dbReference type="RefSeq" id="WP_004388585.1">
    <property type="nucleotide sequence ID" value="NC_009778.1"/>
</dbReference>
<dbReference type="SMR" id="A7MPN9"/>
<dbReference type="GeneID" id="56733078"/>
<dbReference type="KEGG" id="esa:ESA_00085"/>
<dbReference type="HOGENOM" id="CLU_096824_1_0_6"/>
<dbReference type="UniPathway" id="UPA00232"/>
<dbReference type="Proteomes" id="UP000000260">
    <property type="component" value="Chromosome"/>
</dbReference>
<dbReference type="GO" id="GO:0005829">
    <property type="term" value="C:cytosol"/>
    <property type="evidence" value="ECO:0007669"/>
    <property type="project" value="TreeGrafter"/>
</dbReference>
<dbReference type="GO" id="GO:0008813">
    <property type="term" value="F:chorismate lyase activity"/>
    <property type="evidence" value="ECO:0007669"/>
    <property type="project" value="UniProtKB-UniRule"/>
</dbReference>
<dbReference type="GO" id="GO:0042866">
    <property type="term" value="P:pyruvate biosynthetic process"/>
    <property type="evidence" value="ECO:0007669"/>
    <property type="project" value="UniProtKB-UniRule"/>
</dbReference>
<dbReference type="GO" id="GO:0006744">
    <property type="term" value="P:ubiquinone biosynthetic process"/>
    <property type="evidence" value="ECO:0007669"/>
    <property type="project" value="UniProtKB-UniRule"/>
</dbReference>
<dbReference type="FunFam" id="3.40.1410.10:FF:000002">
    <property type="entry name" value="Chorismate pyruvate-lyase"/>
    <property type="match status" value="1"/>
</dbReference>
<dbReference type="Gene3D" id="3.40.1410.10">
    <property type="entry name" value="Chorismate lyase-like"/>
    <property type="match status" value="1"/>
</dbReference>
<dbReference type="HAMAP" id="MF_01632">
    <property type="entry name" value="UbiC"/>
    <property type="match status" value="1"/>
</dbReference>
<dbReference type="InterPro" id="IPR007440">
    <property type="entry name" value="Chorismate--pyruvate_lyase"/>
</dbReference>
<dbReference type="InterPro" id="IPR028978">
    <property type="entry name" value="Chorismate_lyase_/UTRA_dom_sf"/>
</dbReference>
<dbReference type="NCBIfam" id="NF008656">
    <property type="entry name" value="PRK11655.1"/>
    <property type="match status" value="1"/>
</dbReference>
<dbReference type="PANTHER" id="PTHR38683">
    <property type="entry name" value="CHORISMATE PYRUVATE-LYASE"/>
    <property type="match status" value="1"/>
</dbReference>
<dbReference type="PANTHER" id="PTHR38683:SF1">
    <property type="entry name" value="CHORISMATE PYRUVATE-LYASE"/>
    <property type="match status" value="1"/>
</dbReference>
<dbReference type="Pfam" id="PF04345">
    <property type="entry name" value="Chor_lyase"/>
    <property type="match status" value="1"/>
</dbReference>
<dbReference type="SUPFAM" id="SSF64288">
    <property type="entry name" value="Chorismate lyase-like"/>
    <property type="match status" value="1"/>
</dbReference>
<name>UBIC_CROS8</name>
<reference key="1">
    <citation type="journal article" date="2010" name="PLoS ONE">
        <title>Genome sequence of Cronobacter sakazakii BAA-894 and comparative genomic hybridization analysis with other Cronobacter species.</title>
        <authorList>
            <person name="Kucerova E."/>
            <person name="Clifton S.W."/>
            <person name="Xia X.Q."/>
            <person name="Long F."/>
            <person name="Porwollik S."/>
            <person name="Fulton L."/>
            <person name="Fronick C."/>
            <person name="Minx P."/>
            <person name="Kyung K."/>
            <person name="Warren W."/>
            <person name="Fulton R."/>
            <person name="Feng D."/>
            <person name="Wollam A."/>
            <person name="Shah N."/>
            <person name="Bhonagiri V."/>
            <person name="Nash W.E."/>
            <person name="Hallsworth-Pepin K."/>
            <person name="Wilson R.K."/>
            <person name="McClelland M."/>
            <person name="Forsythe S.J."/>
        </authorList>
    </citation>
    <scope>NUCLEOTIDE SEQUENCE [LARGE SCALE GENOMIC DNA]</scope>
    <source>
        <strain>ATCC BAA-894</strain>
    </source>
</reference>
<keyword id="KW-0963">Cytoplasm</keyword>
<keyword id="KW-0456">Lyase</keyword>
<keyword id="KW-0670">Pyruvate</keyword>
<keyword id="KW-1185">Reference proteome</keyword>
<keyword id="KW-0831">Ubiquinone biosynthesis</keyword>
<sequence length="169" mass="19229">MSHPALRQLRALSFFDDISTLDSSLLDWLMLEDSMTRRFEGFCERVTVDMLFEGFVGPEALEEEGEFLPDEPRYWLREILLCGDGVPWLVGRTLVPESTLCGPELALQQLGTTPLGRYLFTSSTLTRDFIQPGRSDELWGRRSLLRLSGKPLLLTELFLPASPLYGEEK</sequence>
<feature type="chain" id="PRO_1000069745" description="Chorismate pyruvate-lyase">
    <location>
        <begin position="1"/>
        <end position="169"/>
    </location>
</feature>
<feature type="binding site" evidence="1">
    <location>
        <position position="35"/>
    </location>
    <ligand>
        <name>substrate</name>
    </ligand>
</feature>
<feature type="binding site" evidence="1">
    <location>
        <position position="77"/>
    </location>
    <ligand>
        <name>substrate</name>
    </ligand>
</feature>
<feature type="binding site" evidence="1">
    <location>
        <position position="115"/>
    </location>
    <ligand>
        <name>substrate</name>
    </ligand>
</feature>
<feature type="binding site" evidence="1">
    <location>
        <position position="156"/>
    </location>
    <ligand>
        <name>substrate</name>
    </ligand>
</feature>
<protein>
    <recommendedName>
        <fullName evidence="1">Chorismate pyruvate-lyase</fullName>
        <shortName evidence="1">CL</shortName>
        <shortName evidence="1">CPL</shortName>
        <ecNumber evidence="1">4.1.3.40</ecNumber>
    </recommendedName>
</protein>
<proteinExistence type="inferred from homology"/>
<accession>A7MPN9</accession>
<gene>
    <name evidence="1" type="primary">ubiC</name>
    <name type="ordered locus">ESA_00085</name>
</gene>
<evidence type="ECO:0000255" key="1">
    <source>
        <dbReference type="HAMAP-Rule" id="MF_01632"/>
    </source>
</evidence>
<organism>
    <name type="scientific">Cronobacter sakazakii (strain ATCC BAA-894)</name>
    <name type="common">Enterobacter sakazakii</name>
    <dbReference type="NCBI Taxonomy" id="290339"/>
    <lineage>
        <taxon>Bacteria</taxon>
        <taxon>Pseudomonadati</taxon>
        <taxon>Pseudomonadota</taxon>
        <taxon>Gammaproteobacteria</taxon>
        <taxon>Enterobacterales</taxon>
        <taxon>Enterobacteriaceae</taxon>
        <taxon>Cronobacter</taxon>
    </lineage>
</organism>